<sequence>MKLSRRSFMKANAVAAAAAAAGLSVPGVARAVVGQQEAIKWDKAPCRFCGTGCGVLVGTQQGRVVACQGDPDAPVNRGLNCIKGYFLPKIMYGKDRLTQPLLRMKNGKYDKEGEFTPITWDQAFDVMEEKFKTALKEKGPESIGMFGSGQWTIWEGYAASKLFKAGFRSNNIDPNARHCMASAVVGFMRTFGMDEPMGCYDDIEQADAFVLWGANMAEMHPILWSRITNSRLSNQNVTVAVLSTYQHRSFELADNGIIFTPQSDLVILNYIANYIIQNNAINQDFFSKHVNLRKGATDIGYGLRPTHPLEKAAKNPGSDASEPMSFEDYKAFVAEYTLEKTAEMTGVPKDQLEQLAQLYADPNKKVISYWTMGFNQHTRGVWANNLVYNLHLLTGKISQPGCGPFSLTGQPSACGTAREVGTFAHRLPADMVVTNEKHRDICEKKWNIPSGTIPAKIGLHAVAQDRALKDGKLNVYWTMCTNNMQAGPNINEERMPGWRDPRNFIIVSDPYPTVSALAADLILPTAMWVEKEGAYGNAERRTQFWRQQVQAPGEAKSDLWQLVQFSRRFKTEEVWPEELLAKKPELRGKTLYEVLYATPEVSKFPVSELAEDQLNDESRELGFYLQKGLFEEYAWFGRGHGHDLAPFDDYHKARGLRWPVVNGKETQWRYSEGNDPYVKAGEGYKFYGKPDGKAVIFALPFEPAAEAPDEEYDLWLSTGRVLEHWHTGSMTRRVPELHRAFPEAVLFIHPLDAKARDLRRGDKVKVVSRRGEVISIVETRGRNRPPQGLVYMPFFDAAQLVNKLTLDATDPLSKETDFKKCAVKLEKV</sequence>
<evidence type="ECO:0000255" key="1">
    <source>
        <dbReference type="HAMAP-Rule" id="MF_01630"/>
    </source>
</evidence>
<organism>
    <name type="scientific">Shigella flexneri</name>
    <dbReference type="NCBI Taxonomy" id="623"/>
    <lineage>
        <taxon>Bacteria</taxon>
        <taxon>Pseudomonadati</taxon>
        <taxon>Pseudomonadota</taxon>
        <taxon>Gammaproteobacteria</taxon>
        <taxon>Enterobacterales</taxon>
        <taxon>Enterobacteriaceae</taxon>
        <taxon>Shigella</taxon>
    </lineage>
</organism>
<dbReference type="EC" id="1.9.6.1" evidence="1"/>
<dbReference type="EMBL" id="AE005674">
    <property type="protein sequence ID" value="AAN43809.1"/>
    <property type="molecule type" value="Genomic_DNA"/>
</dbReference>
<dbReference type="EMBL" id="AE014073">
    <property type="protein sequence ID" value="AAP17626.1"/>
    <property type="molecule type" value="Genomic_DNA"/>
</dbReference>
<dbReference type="RefSeq" id="NP_708102.1">
    <property type="nucleotide sequence ID" value="NC_004337.2"/>
</dbReference>
<dbReference type="RefSeq" id="WP_000778072.1">
    <property type="nucleotide sequence ID" value="NZ_WPGW01000022.1"/>
</dbReference>
<dbReference type="SMR" id="Q83QV0"/>
<dbReference type="STRING" id="198214.SF2290"/>
<dbReference type="PaxDb" id="198214-SF2290"/>
<dbReference type="GeneID" id="1026754"/>
<dbReference type="KEGG" id="sfl:SF2290"/>
<dbReference type="KEGG" id="sfx:S2420"/>
<dbReference type="PATRIC" id="fig|198214.7.peg.2741"/>
<dbReference type="HOGENOM" id="CLU_000422_13_4_6"/>
<dbReference type="Proteomes" id="UP000001006">
    <property type="component" value="Chromosome"/>
</dbReference>
<dbReference type="Proteomes" id="UP000002673">
    <property type="component" value="Chromosome"/>
</dbReference>
<dbReference type="GO" id="GO:0016020">
    <property type="term" value="C:membrane"/>
    <property type="evidence" value="ECO:0007669"/>
    <property type="project" value="TreeGrafter"/>
</dbReference>
<dbReference type="GO" id="GO:0009325">
    <property type="term" value="C:nitrate reductase complex"/>
    <property type="evidence" value="ECO:0007669"/>
    <property type="project" value="TreeGrafter"/>
</dbReference>
<dbReference type="GO" id="GO:0042597">
    <property type="term" value="C:periplasmic space"/>
    <property type="evidence" value="ECO:0007669"/>
    <property type="project" value="UniProtKB-SubCell"/>
</dbReference>
<dbReference type="GO" id="GO:0051539">
    <property type="term" value="F:4 iron, 4 sulfur cluster binding"/>
    <property type="evidence" value="ECO:0007669"/>
    <property type="project" value="UniProtKB-KW"/>
</dbReference>
<dbReference type="GO" id="GO:0009055">
    <property type="term" value="F:electron transfer activity"/>
    <property type="evidence" value="ECO:0007669"/>
    <property type="project" value="UniProtKB-UniRule"/>
</dbReference>
<dbReference type="GO" id="GO:0005506">
    <property type="term" value="F:iron ion binding"/>
    <property type="evidence" value="ECO:0007669"/>
    <property type="project" value="UniProtKB-UniRule"/>
</dbReference>
<dbReference type="GO" id="GO:0030151">
    <property type="term" value="F:molybdenum ion binding"/>
    <property type="evidence" value="ECO:0007669"/>
    <property type="project" value="InterPro"/>
</dbReference>
<dbReference type="GO" id="GO:0043546">
    <property type="term" value="F:molybdopterin cofactor binding"/>
    <property type="evidence" value="ECO:0007669"/>
    <property type="project" value="InterPro"/>
</dbReference>
<dbReference type="GO" id="GO:0050140">
    <property type="term" value="F:nitrate reductase (cytochrome) activity"/>
    <property type="evidence" value="ECO:0007669"/>
    <property type="project" value="UniProtKB-EC"/>
</dbReference>
<dbReference type="GO" id="GO:0045333">
    <property type="term" value="P:cellular respiration"/>
    <property type="evidence" value="ECO:0007669"/>
    <property type="project" value="UniProtKB-ARBA"/>
</dbReference>
<dbReference type="GO" id="GO:0006777">
    <property type="term" value="P:Mo-molybdopterin cofactor biosynthetic process"/>
    <property type="evidence" value="ECO:0007669"/>
    <property type="project" value="UniProtKB-UniRule"/>
</dbReference>
<dbReference type="GO" id="GO:0042128">
    <property type="term" value="P:nitrate assimilation"/>
    <property type="evidence" value="ECO:0007669"/>
    <property type="project" value="UniProtKB-UniRule"/>
</dbReference>
<dbReference type="CDD" id="cd02791">
    <property type="entry name" value="MopB_CT_Nitrate-R-NapA-like"/>
    <property type="match status" value="1"/>
</dbReference>
<dbReference type="CDD" id="cd02754">
    <property type="entry name" value="MopB_Nitrate-R-NapA-like"/>
    <property type="match status" value="1"/>
</dbReference>
<dbReference type="FunFam" id="2.40.40.20:FF:000005">
    <property type="entry name" value="Periplasmic nitrate reductase"/>
    <property type="match status" value="1"/>
</dbReference>
<dbReference type="FunFam" id="3.40.228.10:FF:000001">
    <property type="entry name" value="Periplasmic nitrate reductase"/>
    <property type="match status" value="1"/>
</dbReference>
<dbReference type="Gene3D" id="2.40.40.20">
    <property type="match status" value="1"/>
</dbReference>
<dbReference type="Gene3D" id="3.30.200.210">
    <property type="match status" value="1"/>
</dbReference>
<dbReference type="Gene3D" id="3.40.50.740">
    <property type="match status" value="1"/>
</dbReference>
<dbReference type="Gene3D" id="3.40.228.10">
    <property type="entry name" value="Dimethylsulfoxide Reductase, domain 2"/>
    <property type="match status" value="1"/>
</dbReference>
<dbReference type="HAMAP" id="MF_01630">
    <property type="entry name" value="Nitrate_reduct_NapA"/>
    <property type="match status" value="1"/>
</dbReference>
<dbReference type="InterPro" id="IPR009010">
    <property type="entry name" value="Asp_de-COase-like_dom_sf"/>
</dbReference>
<dbReference type="InterPro" id="IPR041957">
    <property type="entry name" value="CT_Nitrate-R-NapA-like"/>
</dbReference>
<dbReference type="InterPro" id="IPR006657">
    <property type="entry name" value="MoPterin_dinucl-bd_dom"/>
</dbReference>
<dbReference type="InterPro" id="IPR006656">
    <property type="entry name" value="Mopterin_OxRdtase"/>
</dbReference>
<dbReference type="InterPro" id="IPR006963">
    <property type="entry name" value="Mopterin_OxRdtase_4Fe-4S_dom"/>
</dbReference>
<dbReference type="InterPro" id="IPR027467">
    <property type="entry name" value="MopterinOxRdtase_cofactor_BS"/>
</dbReference>
<dbReference type="InterPro" id="IPR010051">
    <property type="entry name" value="Periplasm_NO3_reductase_lsu"/>
</dbReference>
<dbReference type="InterPro" id="IPR050123">
    <property type="entry name" value="Prok_molybdopt-oxidoreductase"/>
</dbReference>
<dbReference type="InterPro" id="IPR006311">
    <property type="entry name" value="TAT_signal"/>
</dbReference>
<dbReference type="InterPro" id="IPR019546">
    <property type="entry name" value="TAT_signal_bac_arc"/>
</dbReference>
<dbReference type="NCBIfam" id="TIGR01706">
    <property type="entry name" value="NAPA"/>
    <property type="match status" value="1"/>
</dbReference>
<dbReference type="NCBIfam" id="NF010055">
    <property type="entry name" value="PRK13532.1"/>
    <property type="match status" value="1"/>
</dbReference>
<dbReference type="NCBIfam" id="TIGR01409">
    <property type="entry name" value="TAT_signal_seq"/>
    <property type="match status" value="1"/>
</dbReference>
<dbReference type="PANTHER" id="PTHR43105:SF11">
    <property type="entry name" value="PERIPLASMIC NITRATE REDUCTASE"/>
    <property type="match status" value="1"/>
</dbReference>
<dbReference type="PANTHER" id="PTHR43105">
    <property type="entry name" value="RESPIRATORY NITRATE REDUCTASE"/>
    <property type="match status" value="1"/>
</dbReference>
<dbReference type="Pfam" id="PF04879">
    <property type="entry name" value="Molybdop_Fe4S4"/>
    <property type="match status" value="1"/>
</dbReference>
<dbReference type="Pfam" id="PF00384">
    <property type="entry name" value="Molybdopterin"/>
    <property type="match status" value="1"/>
</dbReference>
<dbReference type="Pfam" id="PF01568">
    <property type="entry name" value="Molydop_binding"/>
    <property type="match status" value="1"/>
</dbReference>
<dbReference type="SMART" id="SM00926">
    <property type="entry name" value="Molybdop_Fe4S4"/>
    <property type="match status" value="1"/>
</dbReference>
<dbReference type="SUPFAM" id="SSF50692">
    <property type="entry name" value="ADC-like"/>
    <property type="match status" value="1"/>
</dbReference>
<dbReference type="SUPFAM" id="SSF53706">
    <property type="entry name" value="Formate dehydrogenase/DMSO reductase, domains 1-3"/>
    <property type="match status" value="1"/>
</dbReference>
<dbReference type="PROSITE" id="PS51669">
    <property type="entry name" value="4FE4S_MOW_BIS_MGD"/>
    <property type="match status" value="1"/>
</dbReference>
<dbReference type="PROSITE" id="PS00551">
    <property type="entry name" value="MOLYBDOPTERIN_PROK_1"/>
    <property type="match status" value="1"/>
</dbReference>
<dbReference type="PROSITE" id="PS51318">
    <property type="entry name" value="TAT"/>
    <property type="match status" value="1"/>
</dbReference>
<feature type="signal peptide" description="Tat-type signal" evidence="1">
    <location>
        <begin position="1"/>
        <end position="31"/>
    </location>
</feature>
<feature type="chain" id="PRO_0000046006" description="Periplasmic nitrate reductase" evidence="1">
    <location>
        <begin position="32"/>
        <end position="828"/>
    </location>
</feature>
<feature type="domain" description="4Fe-4S Mo/W bis-MGD-type" evidence="1">
    <location>
        <begin position="39"/>
        <end position="95"/>
    </location>
</feature>
<feature type="binding site" evidence="1">
    <location>
        <position position="46"/>
    </location>
    <ligand>
        <name>[4Fe-4S] cluster</name>
        <dbReference type="ChEBI" id="CHEBI:49883"/>
    </ligand>
</feature>
<feature type="binding site" evidence="1">
    <location>
        <position position="49"/>
    </location>
    <ligand>
        <name>[4Fe-4S] cluster</name>
        <dbReference type="ChEBI" id="CHEBI:49883"/>
    </ligand>
</feature>
<feature type="binding site" evidence="1">
    <location>
        <position position="53"/>
    </location>
    <ligand>
        <name>[4Fe-4S] cluster</name>
        <dbReference type="ChEBI" id="CHEBI:49883"/>
    </ligand>
</feature>
<feature type="binding site" evidence="1">
    <location>
        <position position="81"/>
    </location>
    <ligand>
        <name>[4Fe-4S] cluster</name>
        <dbReference type="ChEBI" id="CHEBI:49883"/>
    </ligand>
</feature>
<feature type="binding site" evidence="1">
    <location>
        <position position="83"/>
    </location>
    <ligand>
        <name>Mo-bis(molybdopterin guanine dinucleotide)</name>
        <dbReference type="ChEBI" id="CHEBI:60539"/>
    </ligand>
</feature>
<feature type="binding site" evidence="1">
    <location>
        <position position="150"/>
    </location>
    <ligand>
        <name>Mo-bis(molybdopterin guanine dinucleotide)</name>
        <dbReference type="ChEBI" id="CHEBI:60539"/>
    </ligand>
</feature>
<feature type="binding site" evidence="1">
    <location>
        <position position="175"/>
    </location>
    <ligand>
        <name>Mo-bis(molybdopterin guanine dinucleotide)</name>
        <dbReference type="ChEBI" id="CHEBI:60539"/>
    </ligand>
</feature>
<feature type="binding site" evidence="1">
    <location>
        <position position="179"/>
    </location>
    <ligand>
        <name>Mo-bis(molybdopterin guanine dinucleotide)</name>
        <dbReference type="ChEBI" id="CHEBI:60539"/>
    </ligand>
</feature>
<feature type="binding site" evidence="1">
    <location>
        <begin position="212"/>
        <end position="219"/>
    </location>
    <ligand>
        <name>Mo-bis(molybdopterin guanine dinucleotide)</name>
        <dbReference type="ChEBI" id="CHEBI:60539"/>
    </ligand>
</feature>
<feature type="binding site" evidence="1">
    <location>
        <begin position="243"/>
        <end position="247"/>
    </location>
    <ligand>
        <name>Mo-bis(molybdopterin guanine dinucleotide)</name>
        <dbReference type="ChEBI" id="CHEBI:60539"/>
    </ligand>
</feature>
<feature type="binding site" evidence="1">
    <location>
        <begin position="262"/>
        <end position="264"/>
    </location>
    <ligand>
        <name>Mo-bis(molybdopterin guanine dinucleotide)</name>
        <dbReference type="ChEBI" id="CHEBI:60539"/>
    </ligand>
</feature>
<feature type="binding site" evidence="1">
    <location>
        <position position="372"/>
    </location>
    <ligand>
        <name>Mo-bis(molybdopterin guanine dinucleotide)</name>
        <dbReference type="ChEBI" id="CHEBI:60539"/>
    </ligand>
</feature>
<feature type="binding site" evidence="1">
    <location>
        <position position="376"/>
    </location>
    <ligand>
        <name>Mo-bis(molybdopterin guanine dinucleotide)</name>
        <dbReference type="ChEBI" id="CHEBI:60539"/>
    </ligand>
</feature>
<feature type="binding site" evidence="1">
    <location>
        <position position="482"/>
    </location>
    <ligand>
        <name>Mo-bis(molybdopterin guanine dinucleotide)</name>
        <dbReference type="ChEBI" id="CHEBI:60539"/>
    </ligand>
</feature>
<feature type="binding site" evidence="1">
    <location>
        <begin position="508"/>
        <end position="509"/>
    </location>
    <ligand>
        <name>Mo-bis(molybdopterin guanine dinucleotide)</name>
        <dbReference type="ChEBI" id="CHEBI:60539"/>
    </ligand>
</feature>
<feature type="binding site" evidence="1">
    <location>
        <position position="531"/>
    </location>
    <ligand>
        <name>Mo-bis(molybdopterin guanine dinucleotide)</name>
        <dbReference type="ChEBI" id="CHEBI:60539"/>
    </ligand>
</feature>
<feature type="binding site" evidence="1">
    <location>
        <position position="558"/>
    </location>
    <ligand>
        <name>Mo-bis(molybdopterin guanine dinucleotide)</name>
        <dbReference type="ChEBI" id="CHEBI:60539"/>
    </ligand>
</feature>
<feature type="binding site" evidence="1">
    <location>
        <begin position="718"/>
        <end position="727"/>
    </location>
    <ligand>
        <name>Mo-bis(molybdopterin guanine dinucleotide)</name>
        <dbReference type="ChEBI" id="CHEBI:60539"/>
    </ligand>
</feature>
<feature type="binding site" evidence="1">
    <location>
        <position position="794"/>
    </location>
    <ligand>
        <name>substrate</name>
    </ligand>
</feature>
<feature type="binding site" evidence="1">
    <location>
        <position position="802"/>
    </location>
    <ligand>
        <name>Mo-bis(molybdopterin guanine dinucleotide)</name>
        <dbReference type="ChEBI" id="CHEBI:60539"/>
    </ligand>
</feature>
<feature type="binding site" evidence="1">
    <location>
        <position position="819"/>
    </location>
    <ligand>
        <name>Mo-bis(molybdopterin guanine dinucleotide)</name>
        <dbReference type="ChEBI" id="CHEBI:60539"/>
    </ligand>
</feature>
<gene>
    <name evidence="1" type="primary">napA</name>
    <name type="ordered locus">SF2290</name>
    <name type="ordered locus">S2420</name>
</gene>
<proteinExistence type="inferred from homology"/>
<keyword id="KW-0004">4Fe-4S</keyword>
<keyword id="KW-0249">Electron transport</keyword>
<keyword id="KW-0408">Iron</keyword>
<keyword id="KW-0411">Iron-sulfur</keyword>
<keyword id="KW-0479">Metal-binding</keyword>
<keyword id="KW-0500">Molybdenum</keyword>
<keyword id="KW-0534">Nitrate assimilation</keyword>
<keyword id="KW-0560">Oxidoreductase</keyword>
<keyword id="KW-0574">Periplasm</keyword>
<keyword id="KW-1185">Reference proteome</keyword>
<keyword id="KW-0732">Signal</keyword>
<keyword id="KW-0813">Transport</keyword>
<accession>Q83QV0</accession>
<accession>Q7C0T3</accession>
<protein>
    <recommendedName>
        <fullName evidence="1">Periplasmic nitrate reductase</fullName>
        <ecNumber evidence="1">1.9.6.1</ecNumber>
    </recommendedName>
</protein>
<name>NAPA_SHIFL</name>
<reference key="1">
    <citation type="journal article" date="2002" name="Nucleic Acids Res.">
        <title>Genome sequence of Shigella flexneri 2a: insights into pathogenicity through comparison with genomes of Escherichia coli K12 and O157.</title>
        <authorList>
            <person name="Jin Q."/>
            <person name="Yuan Z."/>
            <person name="Xu J."/>
            <person name="Wang Y."/>
            <person name="Shen Y."/>
            <person name="Lu W."/>
            <person name="Wang J."/>
            <person name="Liu H."/>
            <person name="Yang J."/>
            <person name="Yang F."/>
            <person name="Zhang X."/>
            <person name="Zhang J."/>
            <person name="Yang G."/>
            <person name="Wu H."/>
            <person name="Qu D."/>
            <person name="Dong J."/>
            <person name="Sun L."/>
            <person name="Xue Y."/>
            <person name="Zhao A."/>
            <person name="Gao Y."/>
            <person name="Zhu J."/>
            <person name="Kan B."/>
            <person name="Ding K."/>
            <person name="Chen S."/>
            <person name="Cheng H."/>
            <person name="Yao Z."/>
            <person name="He B."/>
            <person name="Chen R."/>
            <person name="Ma D."/>
            <person name="Qiang B."/>
            <person name="Wen Y."/>
            <person name="Hou Y."/>
            <person name="Yu J."/>
        </authorList>
    </citation>
    <scope>NUCLEOTIDE SEQUENCE [LARGE SCALE GENOMIC DNA]</scope>
    <source>
        <strain>301 / Serotype 2a</strain>
    </source>
</reference>
<reference key="2">
    <citation type="journal article" date="2003" name="Infect. Immun.">
        <title>Complete genome sequence and comparative genomics of Shigella flexneri serotype 2a strain 2457T.</title>
        <authorList>
            <person name="Wei J."/>
            <person name="Goldberg M.B."/>
            <person name="Burland V."/>
            <person name="Venkatesan M.M."/>
            <person name="Deng W."/>
            <person name="Fournier G."/>
            <person name="Mayhew G.F."/>
            <person name="Plunkett G. III"/>
            <person name="Rose D.J."/>
            <person name="Darling A."/>
            <person name="Mau B."/>
            <person name="Perna N.T."/>
            <person name="Payne S.M."/>
            <person name="Runyen-Janecky L.J."/>
            <person name="Zhou S."/>
            <person name="Schwartz D.C."/>
            <person name="Blattner F.R."/>
        </authorList>
    </citation>
    <scope>NUCLEOTIDE SEQUENCE [LARGE SCALE GENOMIC DNA]</scope>
    <source>
        <strain>ATCC 700930 / 2457T / Serotype 2a</strain>
    </source>
</reference>
<comment type="function">
    <text evidence="1">Catalytic subunit of the periplasmic nitrate reductase complex NapAB. Receives electrons from NapB and catalyzes the reduction of nitrate to nitrite.</text>
</comment>
<comment type="catalytic activity">
    <reaction evidence="1">
        <text>2 Fe(II)-[cytochrome] + nitrate + 2 H(+) = 2 Fe(III)-[cytochrome] + nitrite + H2O</text>
        <dbReference type="Rhea" id="RHEA:12909"/>
        <dbReference type="Rhea" id="RHEA-COMP:11777"/>
        <dbReference type="Rhea" id="RHEA-COMP:11778"/>
        <dbReference type="ChEBI" id="CHEBI:15377"/>
        <dbReference type="ChEBI" id="CHEBI:15378"/>
        <dbReference type="ChEBI" id="CHEBI:16301"/>
        <dbReference type="ChEBI" id="CHEBI:17632"/>
        <dbReference type="ChEBI" id="CHEBI:29033"/>
        <dbReference type="ChEBI" id="CHEBI:29034"/>
        <dbReference type="EC" id="1.9.6.1"/>
    </reaction>
</comment>
<comment type="cofactor">
    <cofactor evidence="1">
        <name>[4Fe-4S] cluster</name>
        <dbReference type="ChEBI" id="CHEBI:49883"/>
    </cofactor>
    <text evidence="1">Binds 1 [4Fe-4S] cluster.</text>
</comment>
<comment type="cofactor">
    <cofactor evidence="1">
        <name>Mo-bis(molybdopterin guanine dinucleotide)</name>
        <dbReference type="ChEBI" id="CHEBI:60539"/>
    </cofactor>
    <text evidence="1">Binds 1 molybdenum-bis(molybdopterin guanine dinucleotide) (Mo-bis-MGD) cofactor per subunit.</text>
</comment>
<comment type="subunit">
    <text evidence="1">Component of the periplasmic nitrate reductase NapAB complex composed of NapA and NapB.</text>
</comment>
<comment type="subcellular location">
    <subcellularLocation>
        <location evidence="1">Periplasm</location>
    </subcellularLocation>
</comment>
<comment type="PTM">
    <text evidence="1">Predicted to be exported by the Tat system. The position of the signal peptide cleavage has not been experimentally proven.</text>
</comment>
<comment type="similarity">
    <text evidence="1">Belongs to the prokaryotic molybdopterin-containing oxidoreductase family. NasA/NapA/NarB subfamily.</text>
</comment>